<feature type="chain" id="PRO_0000429509" description="Serine decarboxylase 2">
    <location>
        <begin position="1"/>
        <end position="467"/>
    </location>
</feature>
<feature type="binding site" evidence="1">
    <location>
        <position position="178"/>
    </location>
    <ligand>
        <name>substrate</name>
    </ligand>
</feature>
<feature type="modified residue" description="N6-(pyridoxal phosphate)lysine" evidence="1">
    <location>
        <position position="290"/>
    </location>
</feature>
<protein>
    <recommendedName>
        <fullName>Serine decarboxylase 2</fullName>
        <ecNumber>4.1.1.-</ecNumber>
    </recommendedName>
</protein>
<name>SDC2_ORYSJ</name>
<reference key="1">
    <citation type="journal article" date="2003" name="Science">
        <title>In-depth view of structure, activity, and evolution of rice chromosome 10.</title>
        <authorList>
            <person name="Yu Y."/>
            <person name="Rambo T."/>
            <person name="Currie J."/>
            <person name="Saski C."/>
            <person name="Kim H.-R."/>
            <person name="Collura K."/>
            <person name="Thompson S."/>
            <person name="Simmons J."/>
            <person name="Yang T.-J."/>
            <person name="Nah G."/>
            <person name="Patel A.J."/>
            <person name="Thurmond S."/>
            <person name="Henry D."/>
            <person name="Oates R."/>
            <person name="Palmer M."/>
            <person name="Pries G."/>
            <person name="Gibson J."/>
            <person name="Anderson H."/>
            <person name="Paradkar M."/>
            <person name="Crane L."/>
            <person name="Dale J."/>
            <person name="Carver M.B."/>
            <person name="Wood T."/>
            <person name="Frisch D."/>
            <person name="Engler F."/>
            <person name="Soderlund C."/>
            <person name="Palmer L.E."/>
            <person name="Teytelman L."/>
            <person name="Nascimento L."/>
            <person name="De la Bastide M."/>
            <person name="Spiegel L."/>
            <person name="Ware D."/>
            <person name="O'Shaughnessy A."/>
            <person name="Dike S."/>
            <person name="Dedhia N."/>
            <person name="Preston R."/>
            <person name="Huang E."/>
            <person name="Ferraro K."/>
            <person name="Kuit K."/>
            <person name="Miller B."/>
            <person name="Zutavern T."/>
            <person name="Katzenberger F."/>
            <person name="Muller S."/>
            <person name="Balija V."/>
            <person name="Martienssen R.A."/>
            <person name="Stein L."/>
            <person name="Minx P."/>
            <person name="Johnson D."/>
            <person name="Cordum H."/>
            <person name="Mardis E."/>
            <person name="Cheng Z."/>
            <person name="Jiang J."/>
            <person name="Wilson R."/>
            <person name="McCombie W.R."/>
            <person name="Wing R.A."/>
            <person name="Yuan Q."/>
            <person name="Ouyang S."/>
            <person name="Liu J."/>
            <person name="Jones K.M."/>
            <person name="Gansberger K."/>
            <person name="Moffat K."/>
            <person name="Hill J."/>
            <person name="Tsitrin T."/>
            <person name="Overton L."/>
            <person name="Bera J."/>
            <person name="Kim M."/>
            <person name="Jin S."/>
            <person name="Tallon L."/>
            <person name="Ciecko A."/>
            <person name="Pai G."/>
            <person name="Van Aken S."/>
            <person name="Utterback T."/>
            <person name="Reidmuller S."/>
            <person name="Bormann J."/>
            <person name="Feldblyum T."/>
            <person name="Hsiao J."/>
            <person name="Zismann V."/>
            <person name="Blunt S."/>
            <person name="de Vazeille A.R."/>
            <person name="Shaffer T."/>
            <person name="Koo H."/>
            <person name="Suh B."/>
            <person name="Yang Q."/>
            <person name="Haas B."/>
            <person name="Peterson J."/>
            <person name="Pertea M."/>
            <person name="Volfovsky N."/>
            <person name="Wortman J."/>
            <person name="White O."/>
            <person name="Salzberg S.L."/>
            <person name="Fraser C.M."/>
            <person name="Buell C.R."/>
            <person name="Messing J."/>
            <person name="Song R."/>
            <person name="Fuks G."/>
            <person name="Llaca V."/>
            <person name="Kovchak S."/>
            <person name="Young S."/>
            <person name="Bowers J.E."/>
            <person name="Paterson A.H."/>
            <person name="Johns M.A."/>
            <person name="Mao L."/>
            <person name="Pan H."/>
            <person name="Dean R.A."/>
        </authorList>
    </citation>
    <scope>NUCLEOTIDE SEQUENCE [LARGE SCALE GENOMIC DNA]</scope>
    <source>
        <strain>cv. Nipponbare</strain>
    </source>
</reference>
<reference key="2">
    <citation type="journal article" date="2005" name="Nature">
        <title>The map-based sequence of the rice genome.</title>
        <authorList>
            <consortium name="International rice genome sequencing project (IRGSP)"/>
        </authorList>
    </citation>
    <scope>NUCLEOTIDE SEQUENCE [LARGE SCALE GENOMIC DNA]</scope>
    <source>
        <strain>cv. Nipponbare</strain>
    </source>
</reference>
<reference key="3">
    <citation type="journal article" date="2008" name="Nucleic Acids Res.">
        <title>The rice annotation project database (RAP-DB): 2008 update.</title>
        <authorList>
            <consortium name="The rice annotation project (RAP)"/>
        </authorList>
    </citation>
    <scope>GENOME REANNOTATION</scope>
    <source>
        <strain>cv. Nipponbare</strain>
    </source>
</reference>
<reference key="4">
    <citation type="journal article" date="2013" name="Rice">
        <title>Improvement of the Oryza sativa Nipponbare reference genome using next generation sequence and optical map data.</title>
        <authorList>
            <person name="Kawahara Y."/>
            <person name="de la Bastide M."/>
            <person name="Hamilton J.P."/>
            <person name="Kanamori H."/>
            <person name="McCombie W.R."/>
            <person name="Ouyang S."/>
            <person name="Schwartz D.C."/>
            <person name="Tanaka T."/>
            <person name="Wu J."/>
            <person name="Zhou S."/>
            <person name="Childs K.L."/>
            <person name="Davidson R.M."/>
            <person name="Lin H."/>
            <person name="Quesada-Ocampo L."/>
            <person name="Vaillancourt B."/>
            <person name="Sakai H."/>
            <person name="Lee S.S."/>
            <person name="Kim J."/>
            <person name="Numa H."/>
            <person name="Itoh T."/>
            <person name="Buell C.R."/>
            <person name="Matsumoto T."/>
        </authorList>
    </citation>
    <scope>GENOME REANNOTATION</scope>
    <source>
        <strain>cv. Nipponbare</strain>
    </source>
</reference>
<reference key="5">
    <citation type="journal article" date="2005" name="PLoS Biol.">
        <title>The genomes of Oryza sativa: a history of duplications.</title>
        <authorList>
            <person name="Yu J."/>
            <person name="Wang J."/>
            <person name="Lin W."/>
            <person name="Li S."/>
            <person name="Li H."/>
            <person name="Zhou J."/>
            <person name="Ni P."/>
            <person name="Dong W."/>
            <person name="Hu S."/>
            <person name="Zeng C."/>
            <person name="Zhang J."/>
            <person name="Zhang Y."/>
            <person name="Li R."/>
            <person name="Xu Z."/>
            <person name="Li S."/>
            <person name="Li X."/>
            <person name="Zheng H."/>
            <person name="Cong L."/>
            <person name="Lin L."/>
            <person name="Yin J."/>
            <person name="Geng J."/>
            <person name="Li G."/>
            <person name="Shi J."/>
            <person name="Liu J."/>
            <person name="Lv H."/>
            <person name="Li J."/>
            <person name="Wang J."/>
            <person name="Deng Y."/>
            <person name="Ran L."/>
            <person name="Shi X."/>
            <person name="Wang X."/>
            <person name="Wu Q."/>
            <person name="Li C."/>
            <person name="Ren X."/>
            <person name="Wang J."/>
            <person name="Wang X."/>
            <person name="Li D."/>
            <person name="Liu D."/>
            <person name="Zhang X."/>
            <person name="Ji Z."/>
            <person name="Zhao W."/>
            <person name="Sun Y."/>
            <person name="Zhang Z."/>
            <person name="Bao J."/>
            <person name="Han Y."/>
            <person name="Dong L."/>
            <person name="Ji J."/>
            <person name="Chen P."/>
            <person name="Wu S."/>
            <person name="Liu J."/>
            <person name="Xiao Y."/>
            <person name="Bu D."/>
            <person name="Tan J."/>
            <person name="Yang L."/>
            <person name="Ye C."/>
            <person name="Zhang J."/>
            <person name="Xu J."/>
            <person name="Zhou Y."/>
            <person name="Yu Y."/>
            <person name="Zhang B."/>
            <person name="Zhuang S."/>
            <person name="Wei H."/>
            <person name="Liu B."/>
            <person name="Lei M."/>
            <person name="Yu H."/>
            <person name="Li Y."/>
            <person name="Xu H."/>
            <person name="Wei S."/>
            <person name="He X."/>
            <person name="Fang L."/>
            <person name="Zhang Z."/>
            <person name="Zhang Y."/>
            <person name="Huang X."/>
            <person name="Su Z."/>
            <person name="Tong W."/>
            <person name="Li J."/>
            <person name="Tong Z."/>
            <person name="Li S."/>
            <person name="Ye J."/>
            <person name="Wang L."/>
            <person name="Fang L."/>
            <person name="Lei T."/>
            <person name="Chen C.-S."/>
            <person name="Chen H.-C."/>
            <person name="Xu Z."/>
            <person name="Li H."/>
            <person name="Huang H."/>
            <person name="Zhang F."/>
            <person name="Xu H."/>
            <person name="Li N."/>
            <person name="Zhao C."/>
            <person name="Li S."/>
            <person name="Dong L."/>
            <person name="Huang Y."/>
            <person name="Li L."/>
            <person name="Xi Y."/>
            <person name="Qi Q."/>
            <person name="Li W."/>
            <person name="Zhang B."/>
            <person name="Hu W."/>
            <person name="Zhang Y."/>
            <person name="Tian X."/>
            <person name="Jiao Y."/>
            <person name="Liang X."/>
            <person name="Jin J."/>
            <person name="Gao L."/>
            <person name="Zheng W."/>
            <person name="Hao B."/>
            <person name="Liu S.-M."/>
            <person name="Wang W."/>
            <person name="Yuan L."/>
            <person name="Cao M."/>
            <person name="McDermott J."/>
            <person name="Samudrala R."/>
            <person name="Wang J."/>
            <person name="Wong G.K.-S."/>
            <person name="Yang H."/>
        </authorList>
    </citation>
    <scope>NUCLEOTIDE SEQUENCE [LARGE SCALE GENOMIC DNA]</scope>
    <source>
        <strain>cv. Nipponbare</strain>
    </source>
</reference>
<reference key="6">
    <citation type="submission" date="2006-10" db="EMBL/GenBank/DDBJ databases">
        <title>Oryza sativa full length cDNA.</title>
        <authorList>
            <consortium name="The rice full-length cDNA consortium"/>
        </authorList>
    </citation>
    <scope>NUCLEOTIDE SEQUENCE [LARGE SCALE MRNA]</scope>
    <source>
        <strain>cv. Nipponbare</strain>
    </source>
</reference>
<gene>
    <name type="ordered locus">Os10g0105700</name>
    <name type="ordered locus">LOC_Os10g01640</name>
    <name type="ORF">OsJ_30471</name>
    <name type="ORF">OSJNBa0065H03.2</name>
    <name type="ORF">OSJNBa0071K19.20</name>
</gene>
<organism>
    <name type="scientific">Oryza sativa subsp. japonica</name>
    <name type="common">Rice</name>
    <dbReference type="NCBI Taxonomy" id="39947"/>
    <lineage>
        <taxon>Eukaryota</taxon>
        <taxon>Viridiplantae</taxon>
        <taxon>Streptophyta</taxon>
        <taxon>Embryophyta</taxon>
        <taxon>Tracheophyta</taxon>
        <taxon>Spermatophyta</taxon>
        <taxon>Magnoliopsida</taxon>
        <taxon>Liliopsida</taxon>
        <taxon>Poales</taxon>
        <taxon>Poaceae</taxon>
        <taxon>BOP clade</taxon>
        <taxon>Oryzoideae</taxon>
        <taxon>Oryzeae</taxon>
        <taxon>Oryzinae</taxon>
        <taxon>Oryza</taxon>
        <taxon>Oryza sativa</taxon>
    </lineage>
</organism>
<sequence length="467" mass="52192">MVLLNSEEVSCNDHHQVDVVAAAGLQCSGDMLGDKQLVSQVILEGLEIEEPPADEMEAAEKKAGISRLMAGYVQHLQHRSAYHLGYPLNFDYDFSPLAPFLNFSLNNAGDPFAKVNNSVHSRQFEVAVLNWFANFWDVQRDQFWGYITSGGTEGNLYGLLVGRELFPDGILYASNDSHYSVFKAAKMYRVKCIRIATTVSGEMNYADLKSKLQHNTNSPAIINANIGTTFKGAVDDIDQIISTLEKCGFQNRYYIHCDSALSGMMTPFMKQAPKVSFKKPIGSISVSGHKFLGCPMPCGVVITRLEHAEVLSTDIEYIASRDSTITGSRNGHAPIFLWYTLSKKGYKGLLKEVHICMGNARYLEVLLKQVGISASCNTLSNIVVFERPKDERIVCRWQLACEGNLAHIVVMPNVTFEKLTVFVEELAEKRKDWYQDKGFDIPCLAVDIGKENCYCNLHAKKLRIPKM</sequence>
<accession>Q8RV06</accession>
<accession>C7J7L5</accession>
<accession>Q7XHE6</accession>
<dbReference type="EC" id="4.1.1.-"/>
<dbReference type="EMBL" id="AC037197">
    <property type="protein sequence ID" value="AAG12476.2"/>
    <property type="molecule type" value="Genomic_DNA"/>
</dbReference>
<dbReference type="EMBL" id="AC069324">
    <property type="protein sequence ID" value="AAL75763.1"/>
    <property type="molecule type" value="Genomic_DNA"/>
</dbReference>
<dbReference type="EMBL" id="DP000086">
    <property type="protein sequence ID" value="AAP51789.1"/>
    <property type="molecule type" value="Genomic_DNA"/>
</dbReference>
<dbReference type="EMBL" id="AP008216">
    <property type="protein sequence ID" value="BAH94730.1"/>
    <property type="status" value="ALT_SEQ"/>
    <property type="molecule type" value="Genomic_DNA"/>
</dbReference>
<dbReference type="EMBL" id="AP014966">
    <property type="status" value="NOT_ANNOTATED_CDS"/>
    <property type="molecule type" value="Genomic_DNA"/>
</dbReference>
<dbReference type="EMBL" id="CM000147">
    <property type="protein sequence ID" value="EAZ15061.1"/>
    <property type="molecule type" value="Genomic_DNA"/>
</dbReference>
<dbReference type="EMBL" id="AK243112">
    <property type="status" value="NOT_ANNOTATED_CDS"/>
    <property type="molecule type" value="mRNA"/>
</dbReference>
<dbReference type="RefSeq" id="XP_015613225.1">
    <property type="nucleotide sequence ID" value="XM_015757739.1"/>
</dbReference>
<dbReference type="SMR" id="Q8RV06"/>
<dbReference type="FunCoup" id="Q8RV06">
    <property type="interactions" value="2"/>
</dbReference>
<dbReference type="STRING" id="39947.Q8RV06"/>
<dbReference type="PaxDb" id="39947-Q8RV06"/>
<dbReference type="KEGG" id="dosa:Os10g0105700"/>
<dbReference type="eggNOG" id="KOG0629">
    <property type="taxonomic scope" value="Eukaryota"/>
</dbReference>
<dbReference type="HOGENOM" id="CLU_028929_0_1_1"/>
<dbReference type="InParanoid" id="Q8RV06"/>
<dbReference type="OrthoDB" id="2161780at2759"/>
<dbReference type="PlantReactome" id="R-OSA-1119556">
    <property type="pathway name" value="Choline biosynthesis I"/>
</dbReference>
<dbReference type="Proteomes" id="UP000000763">
    <property type="component" value="Chromosome 10"/>
</dbReference>
<dbReference type="Proteomes" id="UP000007752">
    <property type="component" value="Chromosome 10"/>
</dbReference>
<dbReference type="Proteomes" id="UP000059680">
    <property type="component" value="Chromosome 10"/>
</dbReference>
<dbReference type="GO" id="GO:0030170">
    <property type="term" value="F:pyridoxal phosphate binding"/>
    <property type="evidence" value="ECO:0007669"/>
    <property type="project" value="InterPro"/>
</dbReference>
<dbReference type="GO" id="GO:0102705">
    <property type="term" value="F:serine decarboxylase activity"/>
    <property type="evidence" value="ECO:0007669"/>
    <property type="project" value="RHEA"/>
</dbReference>
<dbReference type="GO" id="GO:0019752">
    <property type="term" value="P:carboxylic acid metabolic process"/>
    <property type="evidence" value="ECO:0007669"/>
    <property type="project" value="InterPro"/>
</dbReference>
<dbReference type="Gene3D" id="3.90.1150.10">
    <property type="entry name" value="Aspartate Aminotransferase, domain 1"/>
    <property type="match status" value="1"/>
</dbReference>
<dbReference type="Gene3D" id="3.40.640.10">
    <property type="entry name" value="Type I PLP-dependent aspartate aminotransferase-like (Major domain)"/>
    <property type="match status" value="1"/>
</dbReference>
<dbReference type="InterPro" id="IPR051151">
    <property type="entry name" value="Group_II_Decarboxylase"/>
</dbReference>
<dbReference type="InterPro" id="IPR002129">
    <property type="entry name" value="PyrdxlP-dep_de-COase"/>
</dbReference>
<dbReference type="InterPro" id="IPR015424">
    <property type="entry name" value="PyrdxlP-dep_Trfase"/>
</dbReference>
<dbReference type="InterPro" id="IPR015421">
    <property type="entry name" value="PyrdxlP-dep_Trfase_major"/>
</dbReference>
<dbReference type="InterPro" id="IPR015422">
    <property type="entry name" value="PyrdxlP-dep_Trfase_small"/>
</dbReference>
<dbReference type="InterPro" id="IPR021115">
    <property type="entry name" value="Pyridoxal-P_BS"/>
</dbReference>
<dbReference type="NCBIfam" id="NF002748">
    <property type="entry name" value="PRK02769.1"/>
    <property type="match status" value="1"/>
</dbReference>
<dbReference type="PANTHER" id="PTHR46101">
    <property type="match status" value="1"/>
</dbReference>
<dbReference type="PANTHER" id="PTHR46101:SF8">
    <property type="entry name" value="SERINE DECARBOXYLASE 2"/>
    <property type="match status" value="1"/>
</dbReference>
<dbReference type="Pfam" id="PF00282">
    <property type="entry name" value="Pyridoxal_deC"/>
    <property type="match status" value="1"/>
</dbReference>
<dbReference type="SUPFAM" id="SSF53383">
    <property type="entry name" value="PLP-dependent transferases"/>
    <property type="match status" value="1"/>
</dbReference>
<dbReference type="PROSITE" id="PS00392">
    <property type="entry name" value="DDC_GAD_HDC_YDC"/>
    <property type="match status" value="1"/>
</dbReference>
<proteinExistence type="evidence at transcript level"/>
<keyword id="KW-0210">Decarboxylase</keyword>
<keyword id="KW-0456">Lyase</keyword>
<keyword id="KW-0663">Pyridoxal phosphate</keyword>
<keyword id="KW-1185">Reference proteome</keyword>
<comment type="function">
    <text evidence="1">Catalyzes the biosynthesis of ethanolamine from serine. Decarboxylation of free serine is the major source of ethanolamine production in plants and ethanolamine metabolism is crucial for the synthesis of choline, phosphatidylethanolamine (PE) and phosphatidylcholine (PC), and thus for plant growth (By similarity).</text>
</comment>
<comment type="catalytic activity">
    <reaction>
        <text>L-serine + H(+) = ethanolamine + CO2</text>
        <dbReference type="Rhea" id="RHEA:45824"/>
        <dbReference type="ChEBI" id="CHEBI:15378"/>
        <dbReference type="ChEBI" id="CHEBI:16526"/>
        <dbReference type="ChEBI" id="CHEBI:33384"/>
        <dbReference type="ChEBI" id="CHEBI:57603"/>
    </reaction>
</comment>
<comment type="cofactor">
    <cofactor evidence="1">
        <name>pyridoxal 5'-phosphate</name>
        <dbReference type="ChEBI" id="CHEBI:597326"/>
    </cofactor>
</comment>
<comment type="similarity">
    <text evidence="2">Belongs to the group II decarboxylase family.</text>
</comment>
<comment type="sequence caution" evidence="2">
    <conflict type="frameshift">
        <sequence resource="EMBL" id="AK243112"/>
    </conflict>
</comment>
<comment type="sequence caution" evidence="2">
    <conflict type="erroneous gene model prediction">
        <sequence resource="EMBL-CDS" id="BAH94730"/>
    </conflict>
</comment>
<evidence type="ECO:0000250" key="1"/>
<evidence type="ECO:0000305" key="2"/>